<evidence type="ECO:0000255" key="1">
    <source>
        <dbReference type="HAMAP-Rule" id="MF_00539"/>
    </source>
</evidence>
<evidence type="ECO:0000256" key="2">
    <source>
        <dbReference type="SAM" id="MobiDB-lite"/>
    </source>
</evidence>
<evidence type="ECO:0000305" key="3"/>
<proteinExistence type="inferred from homology"/>
<reference key="1">
    <citation type="journal article" date="2010" name="J. Bacteriol.">
        <title>Genome sequence of the deep-rooted Yersinia pestis strain Angola reveals new insights into the evolution and pangenome of the plague bacterium.</title>
        <authorList>
            <person name="Eppinger M."/>
            <person name="Worsham P.L."/>
            <person name="Nikolich M.P."/>
            <person name="Riley D.R."/>
            <person name="Sebastian Y."/>
            <person name="Mou S."/>
            <person name="Achtman M."/>
            <person name="Lindler L.E."/>
            <person name="Ravel J."/>
        </authorList>
    </citation>
    <scope>NUCLEOTIDE SEQUENCE [LARGE SCALE GENOMIC DNA]</scope>
    <source>
        <strain>Angola</strain>
    </source>
</reference>
<sequence>MAHKKAGGSTRNGRDSESKRLGVKRFGGEAVLAGSIIVRQRGTKFHAGINVGCGKDHTLFALADGKVKFEVKGPKNRKFISIEAE</sequence>
<protein>
    <recommendedName>
        <fullName evidence="1">Large ribosomal subunit protein bL27</fullName>
    </recommendedName>
    <alternativeName>
        <fullName evidence="3">50S ribosomal protein L27</fullName>
    </alternativeName>
</protein>
<keyword id="KW-0687">Ribonucleoprotein</keyword>
<keyword id="KW-0689">Ribosomal protein</keyword>
<feature type="chain" id="PRO_1000128832" description="Large ribosomal subunit protein bL27">
    <location>
        <begin position="1"/>
        <end position="85"/>
    </location>
</feature>
<feature type="region of interest" description="Disordered" evidence="2">
    <location>
        <begin position="1"/>
        <end position="20"/>
    </location>
</feature>
<dbReference type="EMBL" id="CP000901">
    <property type="protein sequence ID" value="ABX86922.1"/>
    <property type="molecule type" value="Genomic_DNA"/>
</dbReference>
<dbReference type="RefSeq" id="WP_002210179.1">
    <property type="nucleotide sequence ID" value="NZ_CP009935.1"/>
</dbReference>
<dbReference type="SMR" id="A9R588"/>
<dbReference type="GeneID" id="97457883"/>
<dbReference type="KEGG" id="ypg:YpAngola_A3975"/>
<dbReference type="PATRIC" id="fig|349746.12.peg.700"/>
<dbReference type="GO" id="GO:0022625">
    <property type="term" value="C:cytosolic large ribosomal subunit"/>
    <property type="evidence" value="ECO:0007669"/>
    <property type="project" value="TreeGrafter"/>
</dbReference>
<dbReference type="GO" id="GO:0003735">
    <property type="term" value="F:structural constituent of ribosome"/>
    <property type="evidence" value="ECO:0007669"/>
    <property type="project" value="InterPro"/>
</dbReference>
<dbReference type="GO" id="GO:0006412">
    <property type="term" value="P:translation"/>
    <property type="evidence" value="ECO:0007669"/>
    <property type="project" value="UniProtKB-UniRule"/>
</dbReference>
<dbReference type="FunFam" id="2.40.50.100:FF:000001">
    <property type="entry name" value="50S ribosomal protein L27"/>
    <property type="match status" value="1"/>
</dbReference>
<dbReference type="Gene3D" id="2.40.50.100">
    <property type="match status" value="1"/>
</dbReference>
<dbReference type="HAMAP" id="MF_00539">
    <property type="entry name" value="Ribosomal_bL27"/>
    <property type="match status" value="1"/>
</dbReference>
<dbReference type="InterPro" id="IPR001684">
    <property type="entry name" value="Ribosomal_bL27"/>
</dbReference>
<dbReference type="InterPro" id="IPR018261">
    <property type="entry name" value="Ribosomal_bL27_CS"/>
</dbReference>
<dbReference type="NCBIfam" id="TIGR00062">
    <property type="entry name" value="L27"/>
    <property type="match status" value="1"/>
</dbReference>
<dbReference type="PANTHER" id="PTHR15893:SF0">
    <property type="entry name" value="LARGE RIBOSOMAL SUBUNIT PROTEIN BL27M"/>
    <property type="match status" value="1"/>
</dbReference>
<dbReference type="PANTHER" id="PTHR15893">
    <property type="entry name" value="RIBOSOMAL PROTEIN L27"/>
    <property type="match status" value="1"/>
</dbReference>
<dbReference type="Pfam" id="PF01016">
    <property type="entry name" value="Ribosomal_L27"/>
    <property type="match status" value="1"/>
</dbReference>
<dbReference type="PRINTS" id="PR00063">
    <property type="entry name" value="RIBOSOMALL27"/>
</dbReference>
<dbReference type="SUPFAM" id="SSF110324">
    <property type="entry name" value="Ribosomal L27 protein-like"/>
    <property type="match status" value="1"/>
</dbReference>
<dbReference type="PROSITE" id="PS00831">
    <property type="entry name" value="RIBOSOMAL_L27"/>
    <property type="match status" value="1"/>
</dbReference>
<gene>
    <name evidence="1" type="primary">rpmA</name>
    <name type="ordered locus">YpAngola_A3975</name>
</gene>
<accession>A9R588</accession>
<name>RL27_YERPG</name>
<organism>
    <name type="scientific">Yersinia pestis bv. Antiqua (strain Angola)</name>
    <dbReference type="NCBI Taxonomy" id="349746"/>
    <lineage>
        <taxon>Bacteria</taxon>
        <taxon>Pseudomonadati</taxon>
        <taxon>Pseudomonadota</taxon>
        <taxon>Gammaproteobacteria</taxon>
        <taxon>Enterobacterales</taxon>
        <taxon>Yersiniaceae</taxon>
        <taxon>Yersinia</taxon>
    </lineage>
</organism>
<comment type="similarity">
    <text evidence="1">Belongs to the bacterial ribosomal protein bL27 family.</text>
</comment>